<accession>P31865</accession>
<gene>
    <name type="primary">pki1</name>
</gene>
<name>KPYK_HYPJE</name>
<evidence type="ECO:0000250" key="1"/>
<evidence type="ECO:0000250" key="2">
    <source>
        <dbReference type="UniProtKB" id="P14618"/>
    </source>
</evidence>
<evidence type="ECO:0000255" key="3"/>
<evidence type="ECO:0000305" key="4"/>
<keyword id="KW-0067">ATP-binding</keyword>
<keyword id="KW-0324">Glycolysis</keyword>
<keyword id="KW-0418">Kinase</keyword>
<keyword id="KW-0460">Magnesium</keyword>
<keyword id="KW-0479">Metal-binding</keyword>
<keyword id="KW-0547">Nucleotide-binding</keyword>
<keyword id="KW-0597">Phosphoprotein</keyword>
<keyword id="KW-0630">Potassium</keyword>
<keyword id="KW-0670">Pyruvate</keyword>
<keyword id="KW-0808">Transferase</keyword>
<organism>
    <name type="scientific">Hypocrea jecorina</name>
    <name type="common">Trichoderma reesei</name>
    <dbReference type="NCBI Taxonomy" id="51453"/>
    <lineage>
        <taxon>Eukaryota</taxon>
        <taxon>Fungi</taxon>
        <taxon>Dikarya</taxon>
        <taxon>Ascomycota</taxon>
        <taxon>Pezizomycotina</taxon>
        <taxon>Sordariomycetes</taxon>
        <taxon>Hypocreomycetidae</taxon>
        <taxon>Hypocreales</taxon>
        <taxon>Hypocreaceae</taxon>
        <taxon>Trichoderma</taxon>
    </lineage>
</organism>
<feature type="chain" id="PRO_0000112119" description="Pyruvate kinase">
    <location>
        <begin position="1"/>
        <end position="538"/>
    </location>
</feature>
<feature type="binding site" evidence="1">
    <location>
        <position position="72"/>
    </location>
    <ligand>
        <name>substrate</name>
    </ligand>
</feature>
<feature type="binding site" evidence="2">
    <location>
        <begin position="74"/>
        <end position="77"/>
    </location>
    <ligand>
        <name>ATP</name>
        <dbReference type="ChEBI" id="CHEBI:30616"/>
    </ligand>
</feature>
<feature type="binding site" evidence="1">
    <location>
        <position position="74"/>
    </location>
    <ligand>
        <name>K(+)</name>
        <dbReference type="ChEBI" id="CHEBI:29103"/>
    </ligand>
</feature>
<feature type="binding site" evidence="1">
    <location>
        <position position="76"/>
    </location>
    <ligand>
        <name>K(+)</name>
        <dbReference type="ChEBI" id="CHEBI:29103"/>
    </ligand>
</feature>
<feature type="binding site" evidence="1">
    <location>
        <position position="107"/>
    </location>
    <ligand>
        <name>K(+)</name>
        <dbReference type="ChEBI" id="CHEBI:29103"/>
    </ligand>
</feature>
<feature type="binding site" evidence="1">
    <location>
        <position position="108"/>
    </location>
    <ligand>
        <name>K(+)</name>
        <dbReference type="ChEBI" id="CHEBI:29103"/>
    </ligand>
</feature>
<feature type="binding site" evidence="2">
    <location>
        <position position="114"/>
    </location>
    <ligand>
        <name>ATP</name>
        <dbReference type="ChEBI" id="CHEBI:30616"/>
    </ligand>
</feature>
<feature type="binding site" evidence="2">
    <location>
        <position position="200"/>
    </location>
    <ligand>
        <name>ATP</name>
        <dbReference type="ChEBI" id="CHEBI:30616"/>
    </ligand>
</feature>
<feature type="binding site" evidence="1">
    <location>
        <position position="265"/>
    </location>
    <ligand>
        <name>Mg(2+)</name>
        <dbReference type="ChEBI" id="CHEBI:18420"/>
    </ligand>
</feature>
<feature type="binding site" evidence="1">
    <location>
        <position position="288"/>
    </location>
    <ligand>
        <name>substrate</name>
    </ligand>
</feature>
<feature type="binding site" evidence="1">
    <location>
        <position position="289"/>
    </location>
    <ligand>
        <name>Mg(2+)</name>
        <dbReference type="ChEBI" id="CHEBI:18420"/>
    </ligand>
</feature>
<feature type="binding site" evidence="1">
    <location>
        <position position="289"/>
    </location>
    <ligand>
        <name>substrate</name>
    </ligand>
</feature>
<feature type="binding site" evidence="1">
    <location>
        <position position="321"/>
    </location>
    <ligand>
        <name>substrate</name>
    </ligand>
</feature>
<feature type="site" description="Transition state stabilizer" evidence="1">
    <location>
        <position position="263"/>
    </location>
</feature>
<feature type="modified residue" description="Phosphoserine" evidence="3">
    <location>
        <position position="45"/>
    </location>
</feature>
<protein>
    <recommendedName>
        <fullName>Pyruvate kinase</fullName>
        <shortName>PK</shortName>
        <ecNumber>2.7.1.40</ecNumber>
    </recommendedName>
</protein>
<proteinExistence type="inferred from homology"/>
<dbReference type="EC" id="2.7.1.40"/>
<dbReference type="EMBL" id="L07060">
    <property type="protein sequence ID" value="AAA02922.1"/>
    <property type="molecule type" value="Unassigned_DNA"/>
</dbReference>
<dbReference type="PIR" id="JN0780">
    <property type="entry name" value="JN0780"/>
</dbReference>
<dbReference type="SMR" id="P31865"/>
<dbReference type="VEuPathDB" id="FungiDB:TrQ_002335"/>
<dbReference type="OMA" id="RVHHIGE"/>
<dbReference type="UniPathway" id="UPA00109">
    <property type="reaction ID" value="UER00188"/>
</dbReference>
<dbReference type="GO" id="GO:0005524">
    <property type="term" value="F:ATP binding"/>
    <property type="evidence" value="ECO:0007669"/>
    <property type="project" value="UniProtKB-KW"/>
</dbReference>
<dbReference type="GO" id="GO:0016301">
    <property type="term" value="F:kinase activity"/>
    <property type="evidence" value="ECO:0007669"/>
    <property type="project" value="UniProtKB-KW"/>
</dbReference>
<dbReference type="GO" id="GO:0000287">
    <property type="term" value="F:magnesium ion binding"/>
    <property type="evidence" value="ECO:0007669"/>
    <property type="project" value="InterPro"/>
</dbReference>
<dbReference type="GO" id="GO:0030955">
    <property type="term" value="F:potassium ion binding"/>
    <property type="evidence" value="ECO:0007669"/>
    <property type="project" value="InterPro"/>
</dbReference>
<dbReference type="GO" id="GO:0004743">
    <property type="term" value="F:pyruvate kinase activity"/>
    <property type="evidence" value="ECO:0007669"/>
    <property type="project" value="UniProtKB-EC"/>
</dbReference>
<dbReference type="CDD" id="cd00288">
    <property type="entry name" value="Pyruvate_Kinase"/>
    <property type="match status" value="1"/>
</dbReference>
<dbReference type="FunFam" id="2.40.33.10:FF:000001">
    <property type="entry name" value="Pyruvate kinase"/>
    <property type="match status" value="1"/>
</dbReference>
<dbReference type="FunFam" id="3.20.20.60:FF:000001">
    <property type="entry name" value="Pyruvate kinase"/>
    <property type="match status" value="1"/>
</dbReference>
<dbReference type="FunFam" id="3.40.1380.20:FF:000001">
    <property type="entry name" value="Pyruvate kinase"/>
    <property type="match status" value="1"/>
</dbReference>
<dbReference type="Gene3D" id="3.20.20.60">
    <property type="entry name" value="Phosphoenolpyruvate-binding domains"/>
    <property type="match status" value="1"/>
</dbReference>
<dbReference type="Gene3D" id="2.40.33.10">
    <property type="entry name" value="PK beta-barrel domain-like"/>
    <property type="match status" value="1"/>
</dbReference>
<dbReference type="Gene3D" id="3.40.1380.20">
    <property type="entry name" value="Pyruvate kinase, C-terminal domain"/>
    <property type="match status" value="1"/>
</dbReference>
<dbReference type="InterPro" id="IPR001697">
    <property type="entry name" value="Pyr_Knase"/>
</dbReference>
<dbReference type="InterPro" id="IPR015813">
    <property type="entry name" value="Pyrv/PenolPyrv_kinase-like_dom"/>
</dbReference>
<dbReference type="InterPro" id="IPR040442">
    <property type="entry name" value="Pyrv_kinase-like_dom_sf"/>
</dbReference>
<dbReference type="InterPro" id="IPR011037">
    <property type="entry name" value="Pyrv_Knase-like_insert_dom_sf"/>
</dbReference>
<dbReference type="InterPro" id="IPR018209">
    <property type="entry name" value="Pyrv_Knase_AS"/>
</dbReference>
<dbReference type="InterPro" id="IPR015793">
    <property type="entry name" value="Pyrv_Knase_brl"/>
</dbReference>
<dbReference type="InterPro" id="IPR015795">
    <property type="entry name" value="Pyrv_Knase_C"/>
</dbReference>
<dbReference type="InterPro" id="IPR036918">
    <property type="entry name" value="Pyrv_Knase_C_sf"/>
</dbReference>
<dbReference type="InterPro" id="IPR015806">
    <property type="entry name" value="Pyrv_Knase_insert_dom_sf"/>
</dbReference>
<dbReference type="NCBIfam" id="NF004491">
    <property type="entry name" value="PRK05826.1"/>
    <property type="match status" value="1"/>
</dbReference>
<dbReference type="NCBIfam" id="NF004978">
    <property type="entry name" value="PRK06354.1"/>
    <property type="match status" value="1"/>
</dbReference>
<dbReference type="NCBIfam" id="TIGR01064">
    <property type="entry name" value="pyruv_kin"/>
    <property type="match status" value="1"/>
</dbReference>
<dbReference type="PANTHER" id="PTHR11817">
    <property type="entry name" value="PYRUVATE KINASE"/>
    <property type="match status" value="1"/>
</dbReference>
<dbReference type="Pfam" id="PF00224">
    <property type="entry name" value="PK"/>
    <property type="match status" value="1"/>
</dbReference>
<dbReference type="Pfam" id="PF02887">
    <property type="entry name" value="PK_C"/>
    <property type="match status" value="1"/>
</dbReference>
<dbReference type="PRINTS" id="PR01050">
    <property type="entry name" value="PYRUVTKNASE"/>
</dbReference>
<dbReference type="SUPFAM" id="SSF51621">
    <property type="entry name" value="Phosphoenolpyruvate/pyruvate domain"/>
    <property type="match status" value="1"/>
</dbReference>
<dbReference type="SUPFAM" id="SSF50800">
    <property type="entry name" value="PK beta-barrel domain-like"/>
    <property type="match status" value="1"/>
</dbReference>
<dbReference type="SUPFAM" id="SSF52935">
    <property type="entry name" value="PK C-terminal domain-like"/>
    <property type="match status" value="1"/>
</dbReference>
<dbReference type="PROSITE" id="PS00110">
    <property type="entry name" value="PYRUVATE_KINASE"/>
    <property type="match status" value="1"/>
</dbReference>
<comment type="catalytic activity">
    <reaction>
        <text>pyruvate + ATP = phosphoenolpyruvate + ADP + H(+)</text>
        <dbReference type="Rhea" id="RHEA:18157"/>
        <dbReference type="ChEBI" id="CHEBI:15361"/>
        <dbReference type="ChEBI" id="CHEBI:15378"/>
        <dbReference type="ChEBI" id="CHEBI:30616"/>
        <dbReference type="ChEBI" id="CHEBI:58702"/>
        <dbReference type="ChEBI" id="CHEBI:456216"/>
        <dbReference type="EC" id="2.7.1.40"/>
    </reaction>
</comment>
<comment type="cofactor">
    <cofactor evidence="1">
        <name>Mg(2+)</name>
        <dbReference type="ChEBI" id="CHEBI:18420"/>
    </cofactor>
</comment>
<comment type="cofactor">
    <cofactor evidence="1">
        <name>K(+)</name>
        <dbReference type="ChEBI" id="CHEBI:29103"/>
    </cofactor>
</comment>
<comment type="pathway">
    <text>Carbohydrate degradation; glycolysis; pyruvate from D-glyceraldehyde 3-phosphate: step 5/5.</text>
</comment>
<comment type="subunit">
    <text evidence="1">Homotetramer.</text>
</comment>
<comment type="similarity">
    <text evidence="4">Belongs to the pyruvate kinase family.</text>
</comment>
<reference key="1">
    <citation type="journal article" date="1993" name="Gene">
        <title>Characterization of the pyruvate kinase-encoding gene (pki1) of Trichoderma reesei.</title>
        <authorList>
            <person name="Schindler M."/>
            <person name="Mach R.L."/>
            <person name="Vollenhofer S.K."/>
            <person name="Hodits R."/>
            <person name="Gruber F."/>
            <person name="Visser J."/>
            <person name="de Graaff L."/>
            <person name="Kubicek C.P."/>
        </authorList>
    </citation>
    <scope>NUCLEOTIDE SEQUENCE [GENOMIC DNA]</scope>
</reference>
<sequence>MSQISRTQSIMATTAQEHLETGGRINWLASLNTAFTPARNFRRTSIICTIGPKTNSVEALNKLRDAGLNVARMNFSHGSYEYHQSVIDNVRASVAAHPGRPVAIALDTKGPEIRTGNTAGDVDIPISAGTVMNFTTDEKYATACDTQNMYVDYKNITKVIQPGRVIYVDDGVLAFDVLSIKDDQTVEVRARNNGFISSRKGVNLPNTDVDLPALSEKDKADLRFGVKNNVDMVFASFIRRAQDIKDIRDVLGPEGKQIQIIAKIENRQGLNNFAEILEETDGVMVARGDLGIEIPAAEVFAAQKKMIAMCNIAGKPVICATQMLESMIKNPRPTRAEISDVGNAVTDGADCVMLSGETAKGNYPAESIHEMHEASLKAENTIPYVSHFEEMCTLVKRPVSTVESCAMAAVRASLDLGAGGIIVLSTSGDSARLLSKYRPVCPIFMVTRNPTTSRFSHLYRGVYPFLYPEQKPDFDTVNWQEDVDKRIKWAVTRAIELKTLTAGDTVVVVQGWKGGMGNTNTLRIVRADPDHLGIGQME</sequence>